<feature type="chain" id="PRO_1000214315" description="Small ribosomal subunit protein uS5">
    <location>
        <begin position="1"/>
        <end position="226"/>
    </location>
</feature>
<feature type="domain" description="S5 DRBM" evidence="1">
    <location>
        <begin position="48"/>
        <end position="111"/>
    </location>
</feature>
<feature type="region of interest" description="Disordered" evidence="2">
    <location>
        <begin position="1"/>
        <end position="45"/>
    </location>
</feature>
<feature type="compositionally biased region" description="Polar residues" evidence="2">
    <location>
        <begin position="1"/>
        <end position="18"/>
    </location>
</feature>
<feature type="compositionally biased region" description="Basic and acidic residues" evidence="2">
    <location>
        <begin position="20"/>
        <end position="45"/>
    </location>
</feature>
<name>RS5_BEUC1</name>
<protein>
    <recommendedName>
        <fullName evidence="1">Small ribosomal subunit protein uS5</fullName>
    </recommendedName>
    <alternativeName>
        <fullName evidence="3">30S ribosomal protein S5</fullName>
    </alternativeName>
</protein>
<keyword id="KW-1185">Reference proteome</keyword>
<keyword id="KW-0687">Ribonucleoprotein</keyword>
<keyword id="KW-0689">Ribosomal protein</keyword>
<keyword id="KW-0694">RNA-binding</keyword>
<keyword id="KW-0699">rRNA-binding</keyword>
<dbReference type="EMBL" id="CP001618">
    <property type="protein sequence ID" value="ACQ81370.1"/>
    <property type="molecule type" value="Genomic_DNA"/>
</dbReference>
<dbReference type="RefSeq" id="WP_015883610.1">
    <property type="nucleotide sequence ID" value="NC_012669.1"/>
</dbReference>
<dbReference type="SMR" id="C5C0H4"/>
<dbReference type="STRING" id="471853.Bcav_3126"/>
<dbReference type="KEGG" id="bcv:Bcav_3126"/>
<dbReference type="eggNOG" id="COG0098">
    <property type="taxonomic scope" value="Bacteria"/>
</dbReference>
<dbReference type="HOGENOM" id="CLU_065898_1_0_11"/>
<dbReference type="OrthoDB" id="9809045at2"/>
<dbReference type="Proteomes" id="UP000007962">
    <property type="component" value="Chromosome"/>
</dbReference>
<dbReference type="GO" id="GO:0015935">
    <property type="term" value="C:small ribosomal subunit"/>
    <property type="evidence" value="ECO:0007669"/>
    <property type="project" value="InterPro"/>
</dbReference>
<dbReference type="GO" id="GO:0019843">
    <property type="term" value="F:rRNA binding"/>
    <property type="evidence" value="ECO:0007669"/>
    <property type="project" value="UniProtKB-UniRule"/>
</dbReference>
<dbReference type="GO" id="GO:0003735">
    <property type="term" value="F:structural constituent of ribosome"/>
    <property type="evidence" value="ECO:0007669"/>
    <property type="project" value="InterPro"/>
</dbReference>
<dbReference type="GO" id="GO:0006412">
    <property type="term" value="P:translation"/>
    <property type="evidence" value="ECO:0007669"/>
    <property type="project" value="UniProtKB-UniRule"/>
</dbReference>
<dbReference type="FunFam" id="3.30.160.20:FF:000001">
    <property type="entry name" value="30S ribosomal protein S5"/>
    <property type="match status" value="1"/>
</dbReference>
<dbReference type="FunFam" id="3.30.230.10:FF:000002">
    <property type="entry name" value="30S ribosomal protein S5"/>
    <property type="match status" value="1"/>
</dbReference>
<dbReference type="Gene3D" id="3.30.160.20">
    <property type="match status" value="1"/>
</dbReference>
<dbReference type="Gene3D" id="3.30.230.10">
    <property type="match status" value="1"/>
</dbReference>
<dbReference type="HAMAP" id="MF_01307_B">
    <property type="entry name" value="Ribosomal_uS5_B"/>
    <property type="match status" value="1"/>
</dbReference>
<dbReference type="InterPro" id="IPR020568">
    <property type="entry name" value="Ribosomal_Su5_D2-typ_SF"/>
</dbReference>
<dbReference type="InterPro" id="IPR000851">
    <property type="entry name" value="Ribosomal_uS5"/>
</dbReference>
<dbReference type="InterPro" id="IPR005712">
    <property type="entry name" value="Ribosomal_uS5_bac-type"/>
</dbReference>
<dbReference type="InterPro" id="IPR005324">
    <property type="entry name" value="Ribosomal_uS5_C"/>
</dbReference>
<dbReference type="InterPro" id="IPR013810">
    <property type="entry name" value="Ribosomal_uS5_N"/>
</dbReference>
<dbReference type="InterPro" id="IPR018192">
    <property type="entry name" value="Ribosomal_uS5_N_CS"/>
</dbReference>
<dbReference type="InterPro" id="IPR014721">
    <property type="entry name" value="Ribsml_uS5_D2-typ_fold_subgr"/>
</dbReference>
<dbReference type="NCBIfam" id="TIGR01021">
    <property type="entry name" value="rpsE_bact"/>
    <property type="match status" value="1"/>
</dbReference>
<dbReference type="PANTHER" id="PTHR48277">
    <property type="entry name" value="MITOCHONDRIAL RIBOSOMAL PROTEIN S5"/>
    <property type="match status" value="1"/>
</dbReference>
<dbReference type="PANTHER" id="PTHR48277:SF1">
    <property type="entry name" value="MITOCHONDRIAL RIBOSOMAL PROTEIN S5"/>
    <property type="match status" value="1"/>
</dbReference>
<dbReference type="Pfam" id="PF00333">
    <property type="entry name" value="Ribosomal_S5"/>
    <property type="match status" value="1"/>
</dbReference>
<dbReference type="Pfam" id="PF03719">
    <property type="entry name" value="Ribosomal_S5_C"/>
    <property type="match status" value="1"/>
</dbReference>
<dbReference type="SUPFAM" id="SSF54768">
    <property type="entry name" value="dsRNA-binding domain-like"/>
    <property type="match status" value="1"/>
</dbReference>
<dbReference type="SUPFAM" id="SSF54211">
    <property type="entry name" value="Ribosomal protein S5 domain 2-like"/>
    <property type="match status" value="1"/>
</dbReference>
<dbReference type="PROSITE" id="PS00585">
    <property type="entry name" value="RIBOSOMAL_S5"/>
    <property type="match status" value="1"/>
</dbReference>
<dbReference type="PROSITE" id="PS50881">
    <property type="entry name" value="S5_DSRBD"/>
    <property type="match status" value="1"/>
</dbReference>
<gene>
    <name evidence="1" type="primary">rpsE</name>
    <name type="ordered locus">Bcav_3126</name>
</gene>
<accession>C5C0H4</accession>
<reference key="1">
    <citation type="journal article" date="2009" name="Stand. Genomic Sci.">
        <title>Complete genome sequence of Beutenbergia cavernae type strain (HKI 0122).</title>
        <authorList>
            <person name="Land M."/>
            <person name="Pukall R."/>
            <person name="Abt B."/>
            <person name="Goker M."/>
            <person name="Rohde M."/>
            <person name="Glavina Del Rio T."/>
            <person name="Tice H."/>
            <person name="Copeland A."/>
            <person name="Cheng J.F."/>
            <person name="Lucas S."/>
            <person name="Chen F."/>
            <person name="Nolan M."/>
            <person name="Bruce D."/>
            <person name="Goodwin L."/>
            <person name="Pitluck S."/>
            <person name="Ivanova N."/>
            <person name="Mavromatis K."/>
            <person name="Ovchinnikova G."/>
            <person name="Pati A."/>
            <person name="Chen A."/>
            <person name="Palaniappan K."/>
            <person name="Hauser L."/>
            <person name="Chang Y.J."/>
            <person name="Jefferies C.C."/>
            <person name="Saunders E."/>
            <person name="Brettin T."/>
            <person name="Detter J.C."/>
            <person name="Han C."/>
            <person name="Chain P."/>
            <person name="Bristow J."/>
            <person name="Eisen J.A."/>
            <person name="Markowitz V."/>
            <person name="Hugenholtz P."/>
            <person name="Kyrpides N.C."/>
            <person name="Klenk H.P."/>
            <person name="Lapidus A."/>
        </authorList>
    </citation>
    <scope>NUCLEOTIDE SEQUENCE [LARGE SCALE GENOMIC DNA]</scope>
    <source>
        <strain>ATCC BAA-8 / DSM 12333 / CCUG 43141 / JCM 11478 / NBRC 16432 / NCIMB 13614 / HKI 0122</strain>
    </source>
</reference>
<sequence>MAAPQRSRTTGAPSSGGPSENERGRGGDRRGGDRRGGDRRGGDDRNQFVERVVTINRVAKVVKGGRRFSFTALVVVGDGDGTVGVGYGKAKEVPTAIAKGVEEAKKNFFRVPRIQGTIPHSVRGEAAAGVVFLRPASPGTGVIAGGPVRAVLDCAGIHDVLSKSLGSSNAINIVHATVAALQGLEEPAAVAARRGLPLEDVVPGPILRAQARGRADAAAKASTGVA</sequence>
<evidence type="ECO:0000255" key="1">
    <source>
        <dbReference type="HAMAP-Rule" id="MF_01307"/>
    </source>
</evidence>
<evidence type="ECO:0000256" key="2">
    <source>
        <dbReference type="SAM" id="MobiDB-lite"/>
    </source>
</evidence>
<evidence type="ECO:0000305" key="3"/>
<proteinExistence type="inferred from homology"/>
<comment type="function">
    <text evidence="1">With S4 and S12 plays an important role in translational accuracy.</text>
</comment>
<comment type="function">
    <text evidence="1">Located at the back of the 30S subunit body where it stabilizes the conformation of the head with respect to the body.</text>
</comment>
<comment type="subunit">
    <text evidence="1">Part of the 30S ribosomal subunit. Contacts proteins S4 and S8.</text>
</comment>
<comment type="domain">
    <text>The N-terminal domain interacts with the head of the 30S subunit; the C-terminal domain interacts with the body and contacts protein S4. The interaction surface between S4 and S5 is involved in control of translational fidelity.</text>
</comment>
<comment type="similarity">
    <text evidence="1">Belongs to the universal ribosomal protein uS5 family.</text>
</comment>
<organism>
    <name type="scientific">Beutenbergia cavernae (strain ATCC BAA-8 / DSM 12333 / CCUG 43141 / JCM 11478 / NBRC 16432 / NCIMB 13614 / HKI 0122)</name>
    <dbReference type="NCBI Taxonomy" id="471853"/>
    <lineage>
        <taxon>Bacteria</taxon>
        <taxon>Bacillati</taxon>
        <taxon>Actinomycetota</taxon>
        <taxon>Actinomycetes</taxon>
        <taxon>Micrococcales</taxon>
        <taxon>Beutenbergiaceae</taxon>
        <taxon>Beutenbergia</taxon>
    </lineage>
</organism>